<dbReference type="EMBL" id="AF455756">
    <property type="protein sequence ID" value="AAO63807.1"/>
    <property type="molecule type" value="mRNA"/>
</dbReference>
<dbReference type="EMBL" id="AJ580920">
    <property type="protein sequence ID" value="CAE45651.1"/>
    <property type="molecule type" value="mRNA"/>
</dbReference>
<dbReference type="EMBL" id="BC138335">
    <property type="protein sequence ID" value="AAI38336.1"/>
    <property type="molecule type" value="mRNA"/>
</dbReference>
<dbReference type="EMBL" id="BC138336">
    <property type="protein sequence ID" value="AAI38337.1"/>
    <property type="molecule type" value="mRNA"/>
</dbReference>
<dbReference type="CCDS" id="CCDS15404.1">
    <molecule id="Q80Z71-1"/>
</dbReference>
<dbReference type="RefSeq" id="NP_808507.2">
    <molecule id="Q80Z71-1"/>
    <property type="nucleotide sequence ID" value="NM_177839.3"/>
</dbReference>
<dbReference type="SMR" id="Q80Z71"/>
<dbReference type="ComplexPortal" id="CPX-1013">
    <property type="entry name" value="Tenascin-W complex"/>
</dbReference>
<dbReference type="FunCoup" id="Q80Z71">
    <property type="interactions" value="366"/>
</dbReference>
<dbReference type="STRING" id="10090.ENSMUSP00000039452"/>
<dbReference type="GlyCosmos" id="Q80Z71">
    <property type="glycosylation" value="1 site, No reported glycans"/>
</dbReference>
<dbReference type="GlyGen" id="Q80Z71">
    <property type="glycosylation" value="2 sites, 1 N-linked glycan (1 site)"/>
</dbReference>
<dbReference type="iPTMnet" id="Q80Z71"/>
<dbReference type="PhosphoSitePlus" id="Q80Z71"/>
<dbReference type="jPOST" id="Q80Z71"/>
<dbReference type="PaxDb" id="10090-ENSMUSP00000039452"/>
<dbReference type="ProteomicsDB" id="263273">
    <molecule id="Q80Z71-1"/>
</dbReference>
<dbReference type="ProteomicsDB" id="263274">
    <molecule id="Q80Z71-2"/>
</dbReference>
<dbReference type="ABCD" id="Q80Z71">
    <property type="antibodies" value="2 sequenced antibodies"/>
</dbReference>
<dbReference type="Antibodypedia" id="4397">
    <property type="antibodies" value="108 antibodies from 27 providers"/>
</dbReference>
<dbReference type="DNASU" id="329278"/>
<dbReference type="Ensembl" id="ENSMUST00000039178.12">
    <molecule id="Q80Z71-1"/>
    <property type="protein sequence ID" value="ENSMUSP00000039452.6"/>
    <property type="gene ID" value="ENSMUSG00000026725.18"/>
</dbReference>
<dbReference type="GeneID" id="329278"/>
<dbReference type="KEGG" id="mmu:329278"/>
<dbReference type="UCSC" id="uc007dee.2">
    <molecule id="Q80Z71-1"/>
    <property type="organism name" value="mouse"/>
</dbReference>
<dbReference type="AGR" id="MGI:2665790"/>
<dbReference type="CTD" id="63923"/>
<dbReference type="MGI" id="MGI:2665790">
    <property type="gene designation" value="Tnn"/>
</dbReference>
<dbReference type="VEuPathDB" id="HostDB:ENSMUSG00000026725"/>
<dbReference type="eggNOG" id="KOG1225">
    <property type="taxonomic scope" value="Eukaryota"/>
</dbReference>
<dbReference type="eggNOG" id="KOG2579">
    <property type="taxonomic scope" value="Eukaryota"/>
</dbReference>
<dbReference type="eggNOG" id="KOG3544">
    <property type="taxonomic scope" value="Eukaryota"/>
</dbReference>
<dbReference type="GeneTree" id="ENSGT00940000160553"/>
<dbReference type="InParanoid" id="Q80Z71"/>
<dbReference type="OMA" id="EAPIDRY"/>
<dbReference type="OrthoDB" id="2154780at2759"/>
<dbReference type="PhylomeDB" id="Q80Z71"/>
<dbReference type="TreeFam" id="TF329915"/>
<dbReference type="Reactome" id="R-MMU-3000178">
    <property type="pathway name" value="ECM proteoglycans"/>
</dbReference>
<dbReference type="BioGRID-ORCS" id="329278">
    <property type="hits" value="1 hit in 76 CRISPR screens"/>
</dbReference>
<dbReference type="PRO" id="PR:Q80Z71"/>
<dbReference type="Proteomes" id="UP000000589">
    <property type="component" value="Chromosome 1"/>
</dbReference>
<dbReference type="RNAct" id="Q80Z71">
    <property type="molecule type" value="protein"/>
</dbReference>
<dbReference type="Bgee" id="ENSMUSG00000026725">
    <property type="expression patterns" value="Expressed in diaphysis of femur and 35 other cell types or tissues"/>
</dbReference>
<dbReference type="ExpressionAtlas" id="Q80Z71">
    <property type="expression patterns" value="baseline and differential"/>
</dbReference>
<dbReference type="GO" id="GO:0097442">
    <property type="term" value="C:CA3 pyramidal cell dendrite"/>
    <property type="evidence" value="ECO:0000314"/>
    <property type="project" value="UniProtKB"/>
</dbReference>
<dbReference type="GO" id="GO:0009986">
    <property type="term" value="C:cell surface"/>
    <property type="evidence" value="ECO:0000314"/>
    <property type="project" value="MGI"/>
</dbReference>
<dbReference type="GO" id="GO:0031012">
    <property type="term" value="C:extracellular matrix"/>
    <property type="evidence" value="ECO:0000314"/>
    <property type="project" value="MGI"/>
</dbReference>
<dbReference type="GO" id="GO:0005576">
    <property type="term" value="C:extracellular region"/>
    <property type="evidence" value="ECO:0007669"/>
    <property type="project" value="UniProtKB-KW"/>
</dbReference>
<dbReference type="GO" id="GO:1990026">
    <property type="term" value="C:hippocampal mossy fiber expansion"/>
    <property type="evidence" value="ECO:0000314"/>
    <property type="project" value="UniProtKB"/>
</dbReference>
<dbReference type="GO" id="GO:0043005">
    <property type="term" value="C:neuron projection"/>
    <property type="evidence" value="ECO:0000314"/>
    <property type="project" value="UniProtKB"/>
</dbReference>
<dbReference type="GO" id="GO:0043025">
    <property type="term" value="C:neuronal cell body"/>
    <property type="evidence" value="ECO:0000314"/>
    <property type="project" value="UniProtKB"/>
</dbReference>
<dbReference type="GO" id="GO:0090733">
    <property type="term" value="C:tenascin complex"/>
    <property type="evidence" value="ECO:0000353"/>
    <property type="project" value="ComplexPortal"/>
</dbReference>
<dbReference type="GO" id="GO:0042802">
    <property type="term" value="F:identical protein binding"/>
    <property type="evidence" value="ECO:0000314"/>
    <property type="project" value="MGI"/>
</dbReference>
<dbReference type="GO" id="GO:0005178">
    <property type="term" value="F:integrin binding"/>
    <property type="evidence" value="ECO:0000314"/>
    <property type="project" value="MGI"/>
</dbReference>
<dbReference type="GO" id="GO:0007409">
    <property type="term" value="P:axonogenesis"/>
    <property type="evidence" value="ECO:0000314"/>
    <property type="project" value="MGI"/>
</dbReference>
<dbReference type="GO" id="GO:0007160">
    <property type="term" value="P:cell-matrix adhesion"/>
    <property type="evidence" value="ECO:0000314"/>
    <property type="project" value="MGI"/>
</dbReference>
<dbReference type="GO" id="GO:0070593">
    <property type="term" value="P:dendrite self-avoidance"/>
    <property type="evidence" value="ECO:0000314"/>
    <property type="project" value="UniProtKB"/>
</dbReference>
<dbReference type="GO" id="GO:2001223">
    <property type="term" value="P:negative regulation of neuron migration"/>
    <property type="evidence" value="ECO:0000314"/>
    <property type="project" value="UniProtKB"/>
</dbReference>
<dbReference type="GO" id="GO:0001764">
    <property type="term" value="P:neuron migration"/>
    <property type="evidence" value="ECO:0000314"/>
    <property type="project" value="UniProtKB"/>
</dbReference>
<dbReference type="GO" id="GO:1990138">
    <property type="term" value="P:neuron projection extension"/>
    <property type="evidence" value="ECO:0000314"/>
    <property type="project" value="UniProtKB"/>
</dbReference>
<dbReference type="GO" id="GO:0010976">
    <property type="term" value="P:positive regulation of neuron projection development"/>
    <property type="evidence" value="ECO:0000314"/>
    <property type="project" value="ComplexPortal"/>
</dbReference>
<dbReference type="GO" id="GO:1903672">
    <property type="term" value="P:positive regulation of sprouting angiogenesis"/>
    <property type="evidence" value="ECO:0000266"/>
    <property type="project" value="ComplexPortal"/>
</dbReference>
<dbReference type="GO" id="GO:1903010">
    <property type="term" value="P:regulation of bone development"/>
    <property type="evidence" value="ECO:0000314"/>
    <property type="project" value="ComplexPortal"/>
</dbReference>
<dbReference type="GO" id="GO:0030155">
    <property type="term" value="P:regulation of cell adhesion"/>
    <property type="evidence" value="ECO:0000314"/>
    <property type="project" value="ComplexPortal"/>
</dbReference>
<dbReference type="GO" id="GO:0030334">
    <property type="term" value="P:regulation of cell migration"/>
    <property type="evidence" value="ECO:0000314"/>
    <property type="project" value="ComplexPortal"/>
</dbReference>
<dbReference type="GO" id="GO:1905899">
    <property type="term" value="P:regulation of smooth muscle tissue development"/>
    <property type="evidence" value="ECO:0000314"/>
    <property type="project" value="ComplexPortal"/>
</dbReference>
<dbReference type="CDD" id="cd00055">
    <property type="entry name" value="EGF_Lam"/>
    <property type="match status" value="1"/>
</dbReference>
<dbReference type="CDD" id="cd00063">
    <property type="entry name" value="FN3"/>
    <property type="match status" value="12"/>
</dbReference>
<dbReference type="CDD" id="cd00087">
    <property type="entry name" value="FReD"/>
    <property type="match status" value="1"/>
</dbReference>
<dbReference type="FunFam" id="2.60.40.10:FF:000099">
    <property type="entry name" value="Fibronectin 1"/>
    <property type="match status" value="1"/>
</dbReference>
<dbReference type="FunFam" id="2.10.25.10:FF:000001">
    <property type="entry name" value="Tenascin C"/>
    <property type="match status" value="2"/>
</dbReference>
<dbReference type="FunFam" id="3.90.215.10:FF:000001">
    <property type="entry name" value="Tenascin isoform 1"/>
    <property type="match status" value="1"/>
</dbReference>
<dbReference type="FunFam" id="2.10.25.10:FF:000332">
    <property type="entry name" value="Tenascin N"/>
    <property type="match status" value="1"/>
</dbReference>
<dbReference type="FunFam" id="2.60.40.10:FF:000156">
    <property type="entry name" value="Tenascin N"/>
    <property type="match status" value="8"/>
</dbReference>
<dbReference type="FunFam" id="2.60.40.10:FF:000534">
    <property type="entry name" value="Tenascin N"/>
    <property type="match status" value="1"/>
</dbReference>
<dbReference type="FunFam" id="2.60.40.10:FF:000783">
    <property type="entry name" value="Tenascin N"/>
    <property type="match status" value="1"/>
</dbReference>
<dbReference type="Gene3D" id="6.10.250.2590">
    <property type="match status" value="1"/>
</dbReference>
<dbReference type="Gene3D" id="3.90.215.10">
    <property type="entry name" value="Gamma Fibrinogen, chain A, domain 1"/>
    <property type="match status" value="1"/>
</dbReference>
<dbReference type="Gene3D" id="2.60.40.10">
    <property type="entry name" value="Immunoglobulins"/>
    <property type="match status" value="12"/>
</dbReference>
<dbReference type="Gene3D" id="2.10.25.10">
    <property type="entry name" value="Laminin"/>
    <property type="match status" value="3"/>
</dbReference>
<dbReference type="InterPro" id="IPR050991">
    <property type="entry name" value="ECM_Regulatory_Proteins"/>
</dbReference>
<dbReference type="InterPro" id="IPR000742">
    <property type="entry name" value="EGF-like_dom"/>
</dbReference>
<dbReference type="InterPro" id="IPR041161">
    <property type="entry name" value="EGF_Tenascin"/>
</dbReference>
<dbReference type="InterPro" id="IPR036056">
    <property type="entry name" value="Fibrinogen-like_C"/>
</dbReference>
<dbReference type="InterPro" id="IPR014716">
    <property type="entry name" value="Fibrinogen_a/b/g_C_1"/>
</dbReference>
<dbReference type="InterPro" id="IPR002181">
    <property type="entry name" value="Fibrinogen_a/b/g_C_dom"/>
</dbReference>
<dbReference type="InterPro" id="IPR020837">
    <property type="entry name" value="Fibrinogen_CS"/>
</dbReference>
<dbReference type="InterPro" id="IPR003961">
    <property type="entry name" value="FN3_dom"/>
</dbReference>
<dbReference type="InterPro" id="IPR036116">
    <property type="entry name" value="FN3_sf"/>
</dbReference>
<dbReference type="InterPro" id="IPR013783">
    <property type="entry name" value="Ig-like_fold"/>
</dbReference>
<dbReference type="InterPro" id="IPR002049">
    <property type="entry name" value="LE_dom"/>
</dbReference>
<dbReference type="NCBIfam" id="NF040941">
    <property type="entry name" value="GGGWT_bact"/>
    <property type="match status" value="1"/>
</dbReference>
<dbReference type="PANTHER" id="PTHR46708">
    <property type="entry name" value="TENASCIN"/>
    <property type="match status" value="1"/>
</dbReference>
<dbReference type="PANTHER" id="PTHR46708:SF12">
    <property type="entry name" value="TENASCIN N"/>
    <property type="match status" value="1"/>
</dbReference>
<dbReference type="Pfam" id="PF18720">
    <property type="entry name" value="EGF_Tenascin"/>
    <property type="match status" value="1"/>
</dbReference>
<dbReference type="Pfam" id="PF23106">
    <property type="entry name" value="EGF_Teneurin"/>
    <property type="match status" value="3"/>
</dbReference>
<dbReference type="Pfam" id="PF00147">
    <property type="entry name" value="Fibrinogen_C"/>
    <property type="match status" value="1"/>
</dbReference>
<dbReference type="Pfam" id="PF00041">
    <property type="entry name" value="fn3"/>
    <property type="match status" value="12"/>
</dbReference>
<dbReference type="SMART" id="SM00181">
    <property type="entry name" value="EGF"/>
    <property type="match status" value="3"/>
</dbReference>
<dbReference type="SMART" id="SM00186">
    <property type="entry name" value="FBG"/>
    <property type="match status" value="1"/>
</dbReference>
<dbReference type="SMART" id="SM00060">
    <property type="entry name" value="FN3"/>
    <property type="match status" value="12"/>
</dbReference>
<dbReference type="SUPFAM" id="SSF56496">
    <property type="entry name" value="Fibrinogen C-terminal domain-like"/>
    <property type="match status" value="1"/>
</dbReference>
<dbReference type="SUPFAM" id="SSF49265">
    <property type="entry name" value="Fibronectin type III"/>
    <property type="match status" value="7"/>
</dbReference>
<dbReference type="PROSITE" id="PS00022">
    <property type="entry name" value="EGF_1"/>
    <property type="match status" value="3"/>
</dbReference>
<dbReference type="PROSITE" id="PS01186">
    <property type="entry name" value="EGF_2"/>
    <property type="match status" value="3"/>
</dbReference>
<dbReference type="PROSITE" id="PS00514">
    <property type="entry name" value="FIBRINOGEN_C_1"/>
    <property type="match status" value="1"/>
</dbReference>
<dbReference type="PROSITE" id="PS51406">
    <property type="entry name" value="FIBRINOGEN_C_2"/>
    <property type="match status" value="1"/>
</dbReference>
<dbReference type="PROSITE" id="PS50853">
    <property type="entry name" value="FN3"/>
    <property type="match status" value="12"/>
</dbReference>
<gene>
    <name evidence="13" type="primary">Tnn</name>
    <name evidence="10" type="synonym">Tnw</name>
</gene>
<evidence type="ECO:0000250" key="1">
    <source>
        <dbReference type="UniProtKB" id="Q9UQP3"/>
    </source>
</evidence>
<evidence type="ECO:0000255" key="2"/>
<evidence type="ECO:0000255" key="3">
    <source>
        <dbReference type="PROSITE-ProRule" id="PRU00316"/>
    </source>
</evidence>
<evidence type="ECO:0000255" key="4">
    <source>
        <dbReference type="PROSITE-ProRule" id="PRU00739"/>
    </source>
</evidence>
<evidence type="ECO:0000256" key="5">
    <source>
        <dbReference type="SAM" id="MobiDB-lite"/>
    </source>
</evidence>
<evidence type="ECO:0000269" key="6">
    <source>
    </source>
</evidence>
<evidence type="ECO:0000269" key="7">
    <source>
    </source>
</evidence>
<evidence type="ECO:0000269" key="8">
    <source>
    </source>
</evidence>
<evidence type="ECO:0000269" key="9">
    <source>
    </source>
</evidence>
<evidence type="ECO:0000303" key="10">
    <source>
    </source>
</evidence>
<evidence type="ECO:0000305" key="11"/>
<evidence type="ECO:0000312" key="12">
    <source>
        <dbReference type="EMBL" id="AAO63807.1"/>
    </source>
</evidence>
<evidence type="ECO:0000312" key="13">
    <source>
        <dbReference type="MGI" id="MGI:2665790"/>
    </source>
</evidence>
<name>TENN_MOUSE</name>
<feature type="signal peptide" evidence="2">
    <location>
        <begin position="1"/>
        <end position="26"/>
    </location>
</feature>
<feature type="chain" id="PRO_0000007746" description="Tenascin-N">
    <location>
        <begin position="27"/>
        <end position="1560"/>
    </location>
</feature>
<feature type="domain" description="EGF-like 1">
    <location>
        <begin position="167"/>
        <end position="198"/>
    </location>
</feature>
<feature type="domain" description="EGF-like 2">
    <location>
        <begin position="199"/>
        <end position="229"/>
    </location>
</feature>
<feature type="domain" description="EGF-like 3">
    <location>
        <begin position="230"/>
        <end position="260"/>
    </location>
</feature>
<feature type="domain" description="Fibronectin type-III 1" evidence="3">
    <location>
        <begin position="264"/>
        <end position="353"/>
    </location>
</feature>
<feature type="domain" description="Fibronectin type-III 2" evidence="3">
    <location>
        <begin position="354"/>
        <end position="444"/>
    </location>
</feature>
<feature type="domain" description="Fibronectin type-III 3" evidence="3">
    <location>
        <begin position="445"/>
        <end position="532"/>
    </location>
</feature>
<feature type="domain" description="Fibronectin type-III 4" evidence="3">
    <location>
        <begin position="533"/>
        <end position="622"/>
    </location>
</feature>
<feature type="domain" description="Fibronectin type-III 5" evidence="3">
    <location>
        <begin position="623"/>
        <end position="706"/>
    </location>
</feature>
<feature type="domain" description="Fibronectin type-III 6" evidence="3">
    <location>
        <begin position="709"/>
        <end position="798"/>
    </location>
</feature>
<feature type="domain" description="Fibronectin type-III 7" evidence="3">
    <location>
        <begin position="799"/>
        <end position="882"/>
    </location>
</feature>
<feature type="domain" description="Fibronectin type-III 8" evidence="3">
    <location>
        <begin position="885"/>
        <end position="970"/>
    </location>
</feature>
<feature type="domain" description="Fibronectin type-III 9" evidence="3">
    <location>
        <begin position="973"/>
        <end position="1062"/>
    </location>
</feature>
<feature type="domain" description="Fibronectin type-III 10" evidence="3">
    <location>
        <begin position="1063"/>
        <end position="1144"/>
    </location>
</feature>
<feature type="domain" description="Fibronectin type-III 11" evidence="3">
    <location>
        <begin position="1149"/>
        <end position="1238"/>
    </location>
</feature>
<feature type="domain" description="Fibronectin type-III 12" evidence="3">
    <location>
        <begin position="1239"/>
        <end position="1325"/>
    </location>
</feature>
<feature type="domain" description="Fibrinogen C-terminal" evidence="4">
    <location>
        <begin position="1323"/>
        <end position="1540"/>
    </location>
</feature>
<feature type="region of interest" description="Disordered" evidence="5">
    <location>
        <begin position="868"/>
        <end position="888"/>
    </location>
</feature>
<feature type="region of interest" description="Disordered" evidence="5">
    <location>
        <begin position="1044"/>
        <end position="1063"/>
    </location>
</feature>
<feature type="compositionally biased region" description="Basic and acidic residues" evidence="5">
    <location>
        <begin position="1044"/>
        <end position="1061"/>
    </location>
</feature>
<feature type="glycosylation site" description="N-linked (GlcNAc...) asparagine" evidence="2">
    <location>
        <position position="1411"/>
    </location>
</feature>
<feature type="disulfide bond" evidence="4">
    <location>
        <begin position="171"/>
        <end position="181"/>
    </location>
</feature>
<feature type="disulfide bond" evidence="4">
    <location>
        <begin position="175"/>
        <end position="186"/>
    </location>
</feature>
<feature type="disulfide bond" evidence="4">
    <location>
        <begin position="188"/>
        <end position="197"/>
    </location>
</feature>
<feature type="disulfide bond" evidence="4">
    <location>
        <begin position="202"/>
        <end position="212"/>
    </location>
</feature>
<feature type="disulfide bond" evidence="4">
    <location>
        <begin position="206"/>
        <end position="217"/>
    </location>
</feature>
<feature type="disulfide bond" evidence="4">
    <location>
        <begin position="219"/>
        <end position="228"/>
    </location>
</feature>
<feature type="disulfide bond" evidence="4">
    <location>
        <begin position="233"/>
        <end position="243"/>
    </location>
</feature>
<feature type="disulfide bond" evidence="4">
    <location>
        <begin position="237"/>
        <end position="248"/>
    </location>
</feature>
<feature type="disulfide bond" evidence="4">
    <location>
        <begin position="250"/>
        <end position="259"/>
    </location>
</feature>
<feature type="splice variant" id="VSP_058850" description="In isoform 2.">
    <location>
        <begin position="832"/>
        <end position="1095"/>
    </location>
</feature>
<feature type="sequence conflict" description="In Ref. 2; CAE45651." evidence="11" ref="2">
    <original>V</original>
    <variation>L</variation>
    <location>
        <position position="354"/>
    </location>
</feature>
<feature type="sequence conflict" description="In Ref. 2; CAE45651." evidence="11" ref="2">
    <original>T</original>
    <variation>A</variation>
    <location>
        <position position="807"/>
    </location>
</feature>
<feature type="sequence conflict" description="In Ref. 2; CAE45651." evidence="11" ref="2">
    <original>S</original>
    <variation>N</variation>
    <location>
        <position position="1199"/>
    </location>
</feature>
<feature type="sequence conflict" description="In Ref. 1; AAO63807." evidence="11" ref="1">
    <original>A</original>
    <variation>P</variation>
    <location>
        <position position="1221"/>
    </location>
</feature>
<feature type="sequence conflict" description="In Ref. 2; CAE45651." evidence="11" ref="2">
    <original>E</original>
    <variation>G</variation>
    <location>
        <position position="1278"/>
    </location>
</feature>
<feature type="sequence conflict" description="In Ref. 2; CAE45651." evidence="11" ref="2">
    <original>N</original>
    <variation>S</variation>
    <location>
        <position position="1479"/>
    </location>
</feature>
<comment type="function">
    <text evidence="1 6 7 8 9">Extracellular matrix protein that seems to be a ligand for ITGA8:ITGB1, ITGAV:ITGB1 and ITGA4:ITGB1 (By similarity) (PubMed:14709716). Involved in neurite outgrowth and cell migration in hippocampal explants (PubMed:12812753). During endochondral bone formation, inhibits proliferation and differentiation of proteoblasts mediated by canonical WNT signaling (PubMed:17395156). In tumors, stimulates angiogenesis by elongation, migration and sprouting of endothelial cells (By similarity). Expressed in most mammary tumors, may facilitate tumorigenesis by supporting the migratory behavior of breast cancer cells (PubMed:15592496).</text>
</comment>
<comment type="subunit">
    <text evidence="7">Homohexamer.</text>
</comment>
<comment type="subcellular location">
    <subcellularLocation>
        <location evidence="8">Secreted</location>
        <location evidence="8">Extracellular space</location>
        <location evidence="8">Extracellular matrix</location>
    </subcellularLocation>
</comment>
<comment type="alternative products">
    <event type="alternative splicing"/>
    <isoform>
        <id>Q80Z71-1</id>
        <name>1</name>
        <sequence type="displayed"/>
    </isoform>
    <isoform>
        <id>Q80Z71-2</id>
        <name>2</name>
        <sequence type="described" ref="VSP_058850"/>
    </isoform>
    <text evidence="6">A number of isoforms are produced.</text>
</comment>
<comment type="tissue specificity">
    <text evidence="6 7 9">Highest expression in kidney followed by spleen and brain. In brain, highest expression is found in hippocampus, cerebellum and olfactory bulb. Expressed in aortic valve, corneal limbus (PubMed:14709716). Expressed in ribs periosteum. During a fracture repair process, expression increases in cells of newly formed perichondrium/peristeum surrounding the cartalaginous callus (PubMed:14709716, PubMed:17395156).</text>
</comment>
<comment type="developmental stage">
    <text evidence="6 7 9">Hardly detectable at embryonic day (E) 14, then increases until postnatal day 17 and remains detectable in the adult (PubMed:12812753). Expressed as early as 11.5 dpc in the maxillary process until 16.5 dpc when is expressed in the newly formed mandible. At 14.5 dpc is detected in smooth muscle cells of the stomach and intestine and at 15.5, in the periosteum of the ribs. At 16.5 dpc the expression is restricted to mandible, palate and teeth (PubMed:14709716). During endochondral bone formation, first expressed at 13.5 dpc in the perichondrium. At E 16.5, detected in perichondrium and periosteum (PubMed:17395156).</text>
</comment>
<comment type="similarity">
    <text evidence="11">Belongs to the tenascin family.</text>
</comment>
<organism evidence="12">
    <name type="scientific">Mus musculus</name>
    <name type="common">Mouse</name>
    <dbReference type="NCBI Taxonomy" id="10090"/>
    <lineage>
        <taxon>Eukaryota</taxon>
        <taxon>Metazoa</taxon>
        <taxon>Chordata</taxon>
        <taxon>Craniata</taxon>
        <taxon>Vertebrata</taxon>
        <taxon>Euteleostomi</taxon>
        <taxon>Mammalia</taxon>
        <taxon>Eutheria</taxon>
        <taxon>Euarchontoglires</taxon>
        <taxon>Glires</taxon>
        <taxon>Rodentia</taxon>
        <taxon>Myomorpha</taxon>
        <taxon>Muroidea</taxon>
        <taxon>Muridae</taxon>
        <taxon>Murinae</taxon>
        <taxon>Mus</taxon>
        <taxon>Mus</taxon>
    </lineage>
</organism>
<accession>Q80Z71</accession>
<accession>B9EHR3</accession>
<accession>Q70HX0</accession>
<reference evidence="11" key="1">
    <citation type="journal article" date="2003" name="Mol. Cell. Neurosci.">
        <title>Tenascin-N: characterization of a novel member of the tenascin family that mediates neurite repulsion from hippocampal explants.</title>
        <authorList>
            <person name="Neidhardt J."/>
            <person name="Fehr S."/>
            <person name="Kutsche M."/>
            <person name="Loehler J."/>
            <person name="Schachner M."/>
        </authorList>
    </citation>
    <scope>NUCLEOTIDE SEQUENCE [MRNA] (ISOFORM 1)</scope>
    <scope>FUNCTION</scope>
    <scope>ALTERNATIVE SPLICING</scope>
    <scope>TISSUE SPECIFICITY</scope>
    <scope>DEVELOPMENTAL STAGE</scope>
    <source>
        <strain evidence="12">C57BL/6J</strain>
    </source>
</reference>
<reference key="2">
    <citation type="journal article" date="2004" name="J. Cell Sci.">
        <title>Murine tenascin-W: a novel mammalian tenascin expressed in kidney and at sites of bone and smooth muscle development.</title>
        <authorList>
            <person name="Scherberich A."/>
            <person name="Tucker R.P."/>
            <person name="Samandari E."/>
            <person name="Brown-Luedi M."/>
            <person name="Martin D."/>
            <person name="Chiquet-Ehrismann R."/>
        </authorList>
    </citation>
    <scope>NUCLEOTIDE SEQUENCE [MRNA] (ISOFORM 2)</scope>
    <scope>FUNCTION</scope>
    <scope>TISSUE SPECIFICITY</scope>
    <scope>DEVELOPMENTAL STAGE</scope>
</reference>
<reference key="3">
    <citation type="journal article" date="2004" name="Genome Res.">
        <title>The status, quality, and expansion of the NIH full-length cDNA project: the Mammalian Gene Collection (MGC).</title>
        <authorList>
            <consortium name="The MGC Project Team"/>
        </authorList>
    </citation>
    <scope>NUCLEOTIDE SEQUENCE [LARGE SCALE MRNA]</scope>
    <source>
        <tissue>Brain</tissue>
    </source>
</reference>
<reference key="4">
    <citation type="submission" date="2009-01" db="UniProtKB">
        <authorList>
            <person name="Lubec G."/>
            <person name="Sunyer B."/>
            <person name="Chen W.-Q."/>
        </authorList>
    </citation>
    <scope>PROTEIN SEQUENCE OF 1524-1535</scope>
    <scope>IDENTIFICATION BY MASS SPECTROMETRY</scope>
    <source>
        <strain>OF1</strain>
        <tissue>Hippocampus</tissue>
    </source>
</reference>
<reference key="5">
    <citation type="journal article" date="2005" name="Oncogene">
        <title>Tenascin-W is found in malignant mammary tumors, promotes alpha8 integrin-dependent motility and requires p38MAPK activity for BMP-2 and TNF-alpha induced expression in vitro.</title>
        <authorList>
            <person name="Scherberich A."/>
            <person name="Tucker R.P."/>
            <person name="Degen M."/>
            <person name="Brown-Luedi M."/>
            <person name="Andres A.C."/>
            <person name="Chiquet-Ehrismann R."/>
        </authorList>
    </citation>
    <scope>FUNCTION</scope>
    <scope>SUBCELLULAR LOCATION</scope>
</reference>
<reference key="6">
    <citation type="journal article" date="2007" name="Biochem. Biophys. Res. Commun.">
        <title>Tenascin-W inhibits proliferation and differentiation of preosteoblasts during endochondral bone formation.</title>
        <authorList>
            <person name="Kimura H."/>
            <person name="Akiyama H."/>
            <person name="Nakamura T."/>
            <person name="de Crombrugghe B."/>
        </authorList>
    </citation>
    <scope>FUNCTION</scope>
    <scope>TISSUE SPECIFICITY</scope>
    <scope>DEVELOPMENTAL STAGE</scope>
</reference>
<reference key="7">
    <citation type="journal article" date="2012" name="Int. J. Biol. Sci.">
        <title>The adhesion modulating properties of tenascin-W.</title>
        <authorList>
            <person name="Brellier F."/>
            <person name="Martina E."/>
            <person name="Chiquet M."/>
            <person name="Ferralli J."/>
            <person name="van der Heyden M."/>
            <person name="Orend G."/>
            <person name="Schittny J.C."/>
            <person name="Chiquet-Ehrismann R."/>
            <person name="Tucker R.P."/>
        </authorList>
    </citation>
    <scope>FUNCTION</scope>
</reference>
<sequence length="1560" mass="173090">MGLWGMLAFPLGFLLASVLLVASAPATPESPGCSNKEQQVTVSHTYKIDVPKSALVQVETDPQSLSDDGTSLLAPGEDGEEQNIIFRHNIRLQTPQKNCDLADSVQDLLARMKKLEEEMAELKEQCNTNRCCQGAADLSRHCSGHGTFLPETCSCHCDQGWEGADCDQPTCPGACNGHGRCVDGQCVCDAPYVGVDCAYAACPQDCSGHGVCVQGVCQCHEDFTAEDCSEQRCPGDCSGNGFCDTGECYCEMGFTGPDCSQVVAPQGLQLLKSTENSLLVSWEPSSEVDYYLLSYYPLGKEQATKQVRVPKEQHTYDITGLLPGTKYIVTLRNVKKDISSSPQHLLATTDLAVVGTAWVNEETETSLDVEWENPLTEVDYYKLRYGPLTGQEVTEVTVPKSRDPKSRYDITGLQPGTEYKITVVPIRGDLEGKPILLNGRTEIDGPTNVVTNQVTEDTASVSWDPVRADIDKYVVRYIAPDGETKEKAVPKDQSSTVLTGLKPGEAYKVFVWAERGNQGSKKADTKALTEIDSPENLVTDRVTENSLSVSWDPVEADIDRYVVSYTSVDGETKQVPVKKDQRSTVLTGLSPGVEYKVYVWAEKGDRESKKANTKAPTDIDSPKNLVTDQVTENTLSVSWDPVQANIDRYMVSYTSADGETREVPVPKEKSSTVLTGLRPGVEYKVHVWAQKGTQESRKANTKAPTDIDGPKNLVTDQVTETTLSVSWDPVEADIDRYMVRYTSPDGETKEVPVSKDKSSTVLRGLRPGVEYKVDVWAQKGAQDSRKANTKAPTDIDSPKNLVTEQVTESTATVSWDPVEADIDRYVVRYTSVDGETREFLVGKDQTSTVLTGMRPGVEYQVDVWAQKGTQESRKTSTKAPTDIDGPKNLVTDQVTETTLSVSWDPVEADIDRYMVRYTSPDGETKEVPVSKDKSSTVLRGLRPGVEYKVDVWAQKGAQDSRKANTKAPTDIDSPKNLAIDQVTETTLSVSWDPVQADIDRYVVRYTSADGESKEFLIGKEQRSTVLTGLRPGVEYKVEVWAQKGARESKKANTEGHTDIDSPKNLVTNQVTENTATISWDPVQADIDRYMVRYTSADGETREIPVRKEKSSTVLTGLRPGVEYTVQVWAQKGARESKKAKTKAPTEIDSPKNLVTNRVTENTATISWDPVRANIDRYMVRYTSADGETKEIPVSKDQSSTILTGLKPGMEYTIHVWAQKGARESKKADTKALTEIDPPRNLRPFGVTHSGGVLTWLPPSAQIDGYILTYQFPNGTVKEVELPRGQQRFELQDLEQGVTYPVSLVAFKGNQRSRTVSTTLSTVDARFPHPSDCSQVQQNTNAASGLYTIYLNGDASRPMQVYCDMDTDGGGWIVFQRRNTGQLDFFKRWRSYVEGFGDPMKEFWLGLDKLHNLTTGTTTRYEVRADLQTFNESAYAVYDFFQVASSKERYKLSVGKYRGTAGDALTYHNGWKFTTFDRDNDIALSNCALTHHGGWWYKNCHLANPNGKYGETKHSEGVNWEPWKGHEFSIPYVELKIRPFGYSRDRFSGRKKRSIGKARMF</sequence>
<protein>
    <recommendedName>
        <fullName evidence="13">Tenascin-N</fullName>
        <shortName>TN-N</shortName>
    </recommendedName>
    <alternativeName>
        <fullName evidence="10">Tenascin-W</fullName>
        <shortName evidence="10">TN-W</shortName>
    </alternativeName>
</protein>
<keyword id="KW-0025">Alternative splicing</keyword>
<keyword id="KW-0903">Direct protein sequencing</keyword>
<keyword id="KW-1015">Disulfide bond</keyword>
<keyword id="KW-0245">EGF-like domain</keyword>
<keyword id="KW-0272">Extracellular matrix</keyword>
<keyword id="KW-0325">Glycoprotein</keyword>
<keyword id="KW-1185">Reference proteome</keyword>
<keyword id="KW-0677">Repeat</keyword>
<keyword id="KW-0964">Secreted</keyword>
<keyword id="KW-0732">Signal</keyword>
<proteinExistence type="evidence at protein level"/>